<protein>
    <recommendedName>
        <fullName evidence="9">Response regulator RamR</fullName>
    </recommendedName>
    <alternativeName>
        <fullName evidence="9">Transcriptional activator RamR</fullName>
    </alternativeName>
</protein>
<accession>Q7AKE4</accession>
<accession>Q53820</accession>
<organism>
    <name type="scientific">Streptomyces coelicolor (strain ATCC BAA-471 / A3(2) / M145)</name>
    <dbReference type="NCBI Taxonomy" id="100226"/>
    <lineage>
        <taxon>Bacteria</taxon>
        <taxon>Bacillati</taxon>
        <taxon>Actinomycetota</taxon>
        <taxon>Actinomycetes</taxon>
        <taxon>Kitasatosporales</taxon>
        <taxon>Streptomycetaceae</taxon>
        <taxon>Streptomyces</taxon>
        <taxon>Streptomyces albidoflavus group</taxon>
    </lineage>
</organism>
<feature type="chain" id="PRO_0000445443" description="Response regulator RamR">
    <location>
        <begin position="1"/>
        <end position="202"/>
    </location>
</feature>
<feature type="domain" description="HTH luxR-type" evidence="1">
    <location>
        <begin position="135"/>
        <end position="200"/>
    </location>
</feature>
<feature type="DNA-binding region" description="H-T-H motif" evidence="1">
    <location>
        <begin position="159"/>
        <end position="178"/>
    </location>
</feature>
<feature type="region of interest" description="Response regulatory" evidence="12">
    <location>
        <begin position="1"/>
        <end position="121"/>
    </location>
</feature>
<feature type="mutagenesis site" description="Restores aerial hyphae formation in ramR deletion mutants, activates RamC expression." evidence="4">
    <original>D</original>
    <variation>A</variation>
    <location>
        <position position="12"/>
    </location>
</feature>
<feature type="mutagenesis site" description="Does not restore aerial hyphae formation in ramR deletion mutants. Does not activate RamC expression, does not bind ramC promoter, does not form homodimers." evidence="3 4">
    <original>D</original>
    <variation>A</variation>
    <location>
        <position position="56"/>
    </location>
</feature>
<feature type="mutagenesis site" description="Restores aerial hyphae formation in ramR deletion mutants, does not bind ramC promoter." evidence="3">
    <original>D</original>
    <variation>E</variation>
    <location>
        <position position="56"/>
    </location>
</feature>
<feature type="mutagenesis site" description="Does not restore aerial hyphae formation in ramR deletion mutants, does not bind ramC promoter, forms homodimers." evidence="4">
    <original>D</original>
    <variation>N</variation>
    <location>
        <position position="56"/>
    </location>
</feature>
<feature type="mutagenesis site" description="Restores aerial hyphae formation in ramR deletion mutants, activates RamC expression." evidence="4">
    <original>T</original>
    <variation>A</variation>
    <variation>I</variation>
    <location>
        <position position="84"/>
    </location>
</feature>
<feature type="mutagenesis site" description="Does not restore aerial hyphae formation in ramR deletion mutants, does not activate RamC expression. Has lost cooperative binding to the ramC promoter, binds only the high affinity site, forms homodimers." evidence="4">
    <original>L</original>
    <variation>A</variation>
    <variation>W</variation>
    <location>
        <position position="102"/>
    </location>
</feature>
<feature type="mutagenesis site" description="Restores aerial hyphae formation in ramR deletion mutants, activates RamC expression." evidence="4">
    <original>L</original>
    <variation>Y</variation>
    <location>
        <position position="102"/>
    </location>
</feature>
<feature type="mutagenesis site" description="Does not restore aerial hyphae formation in ramR deletion mutants, does not activate RamC expression, does not bind ramC promoter, does not form homodimers." evidence="4">
    <original>K</original>
    <variation>A</variation>
    <location>
        <position position="105"/>
    </location>
</feature>
<keyword id="KW-0010">Activator</keyword>
<keyword id="KW-0238">DNA-binding</keyword>
<keyword id="KW-0597">Phosphoprotein</keyword>
<keyword id="KW-1185">Reference proteome</keyword>
<keyword id="KW-0804">Transcription</keyword>
<keyword id="KW-0805">Transcription regulation</keyword>
<dbReference type="EMBL" id="U03771">
    <property type="protein sequence ID" value="AAA21390.1"/>
    <property type="molecule type" value="Genomic_DNA"/>
</dbReference>
<dbReference type="EMBL" id="AL939128">
    <property type="protein sequence ID" value="CAD55386.1"/>
    <property type="molecule type" value="Genomic_DNA"/>
</dbReference>
<dbReference type="PIR" id="T35545">
    <property type="entry name" value="T35545"/>
</dbReference>
<dbReference type="RefSeq" id="NP_733711.1">
    <property type="nucleotide sequence ID" value="NC_003888.3"/>
</dbReference>
<dbReference type="RefSeq" id="WP_011031103.1">
    <property type="nucleotide sequence ID" value="NZ_VNID01000002.1"/>
</dbReference>
<dbReference type="SMR" id="Q7AKE4"/>
<dbReference type="STRING" id="100226.gene:17764343"/>
<dbReference type="DrugBank" id="DB04209">
    <property type="generic name" value="Dequalinium"/>
</dbReference>
<dbReference type="PaxDb" id="100226-SCO6685"/>
<dbReference type="GeneID" id="91382431"/>
<dbReference type="KEGG" id="sco:SCO6685"/>
<dbReference type="PATRIC" id="fig|100226.15.peg.6790"/>
<dbReference type="eggNOG" id="COG2197">
    <property type="taxonomic scope" value="Bacteria"/>
</dbReference>
<dbReference type="HOGENOM" id="CLU_000445_90_0_11"/>
<dbReference type="InParanoid" id="Q7AKE4"/>
<dbReference type="OrthoDB" id="9808843at2"/>
<dbReference type="PhylomeDB" id="Q7AKE4"/>
<dbReference type="Proteomes" id="UP000001973">
    <property type="component" value="Chromosome"/>
</dbReference>
<dbReference type="GO" id="GO:0003677">
    <property type="term" value="F:DNA binding"/>
    <property type="evidence" value="ECO:0007669"/>
    <property type="project" value="UniProtKB-KW"/>
</dbReference>
<dbReference type="GO" id="GO:0006355">
    <property type="term" value="P:regulation of DNA-templated transcription"/>
    <property type="evidence" value="ECO:0007669"/>
    <property type="project" value="InterPro"/>
</dbReference>
<dbReference type="CDD" id="cd06170">
    <property type="entry name" value="LuxR_C_like"/>
    <property type="match status" value="1"/>
</dbReference>
<dbReference type="CDD" id="cd17535">
    <property type="entry name" value="REC_NarL-like"/>
    <property type="match status" value="1"/>
</dbReference>
<dbReference type="Gene3D" id="3.40.50.2300">
    <property type="match status" value="1"/>
</dbReference>
<dbReference type="Gene3D" id="1.10.10.10">
    <property type="entry name" value="Winged helix-like DNA-binding domain superfamily/Winged helix DNA-binding domain"/>
    <property type="match status" value="1"/>
</dbReference>
<dbReference type="InterPro" id="IPR011006">
    <property type="entry name" value="CheY-like_superfamily"/>
</dbReference>
<dbReference type="InterPro" id="IPR016032">
    <property type="entry name" value="Sig_transdc_resp-reg_C-effctor"/>
</dbReference>
<dbReference type="InterPro" id="IPR000792">
    <property type="entry name" value="Tscrpt_reg_LuxR_C"/>
</dbReference>
<dbReference type="InterPro" id="IPR039420">
    <property type="entry name" value="WalR-like"/>
</dbReference>
<dbReference type="InterPro" id="IPR036388">
    <property type="entry name" value="WH-like_DNA-bd_sf"/>
</dbReference>
<dbReference type="PANTHER" id="PTHR43214:SF42">
    <property type="entry name" value="TRANSCRIPTIONAL REGULATORY PROTEIN DESR"/>
    <property type="match status" value="1"/>
</dbReference>
<dbReference type="PANTHER" id="PTHR43214">
    <property type="entry name" value="TWO-COMPONENT RESPONSE REGULATOR"/>
    <property type="match status" value="1"/>
</dbReference>
<dbReference type="Pfam" id="PF00196">
    <property type="entry name" value="GerE"/>
    <property type="match status" value="1"/>
</dbReference>
<dbReference type="PRINTS" id="PR00038">
    <property type="entry name" value="HTHLUXR"/>
</dbReference>
<dbReference type="SMART" id="SM00421">
    <property type="entry name" value="HTH_LUXR"/>
    <property type="match status" value="1"/>
</dbReference>
<dbReference type="SUPFAM" id="SSF46894">
    <property type="entry name" value="C-terminal effector domain of the bipartite response regulators"/>
    <property type="match status" value="1"/>
</dbReference>
<dbReference type="SUPFAM" id="SSF52172">
    <property type="entry name" value="CheY-like"/>
    <property type="match status" value="1"/>
</dbReference>
<dbReference type="PROSITE" id="PS50043">
    <property type="entry name" value="HTH_LUXR_2"/>
    <property type="match status" value="1"/>
</dbReference>
<sequence length="202" mass="21490">MGEMVRIAVVHDEKLLRSALVQLLRSDDTLDVSSHCLDADGPELSAALPADVCVVDGECLTGPEDAGAGRLRARYGDRLVVLATAKRPGVLRRAFDGGALGLVDKNAPAHRLITAVHTVARGERFLDETLTVALLKGAEMPLTTRELGVLTLASQGAPIAEIAARLHLSRGTVRNYMATAVRKVGARNRVDAIRIVQSAGWT</sequence>
<gene>
    <name evidence="10" type="primary">ramR</name>
    <name type="ordered locus">SCO6685</name>
</gene>
<evidence type="ECO:0000255" key="1">
    <source>
        <dbReference type="PROSITE-ProRule" id="PRU00411"/>
    </source>
</evidence>
<evidence type="ECO:0000269" key="2">
    <source>
    </source>
</evidence>
<evidence type="ECO:0000269" key="3">
    <source>
    </source>
</evidence>
<evidence type="ECO:0000269" key="4">
    <source>
    </source>
</evidence>
<evidence type="ECO:0000269" key="5">
    <source>
    </source>
</evidence>
<evidence type="ECO:0000269" key="6">
    <source>
    </source>
</evidence>
<evidence type="ECO:0000269" key="7">
    <source>
    </source>
</evidence>
<evidence type="ECO:0000269" key="8">
    <source>
    </source>
</evidence>
<evidence type="ECO:0000303" key="9">
    <source>
    </source>
</evidence>
<evidence type="ECO:0000303" key="10">
    <source>
    </source>
</evidence>
<evidence type="ECO:0000305" key="11">
    <source>
    </source>
</evidence>
<evidence type="ECO:0000305" key="12">
    <source>
    </source>
</evidence>
<comment type="function">
    <text evidence="2 3 4 5 6 8">A transcription factor required for aerial hyphae formation on rich medium (PubMed:12100547, PubMed:12453210). Activates transcription of ramC. Might be part of a two-component regulatory system (PubMed:12453210). Binds the promoter of ramC (PubMed:12100547, PubMed:12453210). Non-phosphorylated protein cooperatively binds multiple sites in the ramC promoter. Has not been seen to autophosphorylate using the small molecule phosphodonors phosphoramidate, acetyl phosphate or carbamoyl phosphate (PubMed:16051268). Upon low expression suppresses the bald (bld, no aerial hyphae) phenotype of citA but not bldJ mutants; higher expression also suppresses the bldJ mutant as well as several other bld mutations, inducing SapB production even on media where SapB is normally not produced (PubMed:12453210). Expression of the ram locus (ramA, ramB and ramR) induces rapid aerial mycelium formation in S.lividans (PubMed:8206859). Overexpression suppresses the no aerial hyphae phenotype of a chaplin-negative strain, probably by inducing expression of SapB (PubMed:17462011). Overexpression of RamR show there are about 280 genes having at least a threefold increase or fourfold decrease in RNA abundance versus wild-type including gene cluster SCO4072-SCO4075 (PubMed:16925552).</text>
</comment>
<comment type="subunit">
    <text evidence="4">Homodimer, in the absence of phosphorylation.</text>
</comment>
<comment type="induction">
    <text evidence="3 7">Transcription about 8-10 hours before aerial hyphae formation commences, peaks at 38 hours just before aerial hyphae formation starts, decreases rapidly and stops as sporulation commences about 70 hours. Not autoregulated.</text>
</comment>
<comment type="domain">
    <text evidence="4">The N-terminal response regulatory domain is atypical as it does not have conserved residues usually found in these domains; it is required for both homodimerization and DNA-binding. The C-terminal domain does not bind DNA alone, nor does it form homodimers. At very high concentrations overexpression of the C-terminal domain has a dominant-negative effect on DNA-binding by the whole protein.</text>
</comment>
<comment type="PTM">
    <text evidence="11 12">May be phosphorylated by an unknown kinase, probably on Asp-56.</text>
</comment>
<comment type="disruption phenotype">
    <text evidence="2 3 6">Deletion of ramR leads to loss of aerial hyphae and sporulation on rich solid medium after 4 days growth; by 5 days aerial hyphae and RamC are expressed (PubMed:12100547, PubMed:12453210). Deletion on rich medium leads to an initially bald (bld, no aerial hyphae) phenotype; after 4 days develops a substantial aerial mycelium. Wild-type mycelium on minimal medium (PubMed:17462011). No expression of SapB, normal expression of chaplins. A complete chaplin-negative plus ram-negative strain (deletion of ramR or the ramC-ramS-ramA-ramB operon) leads to the complete loss of robust aerial hyphae (PubMed:17462011).</text>
</comment>
<comment type="caution">
    <text evidence="11">It is uncertain if Met-1 or Met-4 is the initiator.</text>
</comment>
<reference key="1">
    <citation type="journal article" date="1994" name="J. Bacteriol.">
        <title>Cloning and analysis of a gene cluster from Streptomyces coelicolor that causes accelerated aerial mycelium formation in Streptomyces lividans.</title>
        <authorList>
            <person name="Ma H."/>
            <person name="Kendall K."/>
        </authorList>
    </citation>
    <scope>NUCLEOTIDE SEQUENCE [GENOMIC DNA]</scope>
    <scope>FUNCTION</scope>
    <source>
        <strain>A3(2) / M130</strain>
    </source>
</reference>
<reference key="2">
    <citation type="journal article" date="2002" name="Nature">
        <title>Complete genome sequence of the model actinomycete Streptomyces coelicolor A3(2).</title>
        <authorList>
            <person name="Bentley S.D."/>
            <person name="Chater K.F."/>
            <person name="Cerdeno-Tarraga A.-M."/>
            <person name="Challis G.L."/>
            <person name="Thomson N.R."/>
            <person name="James K.D."/>
            <person name="Harris D.E."/>
            <person name="Quail M.A."/>
            <person name="Kieser H."/>
            <person name="Harper D."/>
            <person name="Bateman A."/>
            <person name="Brown S."/>
            <person name="Chandra G."/>
            <person name="Chen C.W."/>
            <person name="Collins M."/>
            <person name="Cronin A."/>
            <person name="Fraser A."/>
            <person name="Goble A."/>
            <person name="Hidalgo J."/>
            <person name="Hornsby T."/>
            <person name="Howarth S."/>
            <person name="Huang C.-H."/>
            <person name="Kieser T."/>
            <person name="Larke L."/>
            <person name="Murphy L.D."/>
            <person name="Oliver K."/>
            <person name="O'Neil S."/>
            <person name="Rabbinowitsch E."/>
            <person name="Rajandream M.A."/>
            <person name="Rutherford K.M."/>
            <person name="Rutter S."/>
            <person name="Seeger K."/>
            <person name="Saunders D."/>
            <person name="Sharp S."/>
            <person name="Squares R."/>
            <person name="Squares S."/>
            <person name="Taylor K."/>
            <person name="Warren T."/>
            <person name="Wietzorrek A."/>
            <person name="Woodward J.R."/>
            <person name="Barrell B.G."/>
            <person name="Parkhill J."/>
            <person name="Hopwood D.A."/>
        </authorList>
    </citation>
    <scope>NUCLEOTIDE SEQUENCE [LARGE SCALE GENOMIC DNA]</scope>
    <source>
        <strain>ATCC BAA-471 / A3(2) / M145</strain>
    </source>
</reference>
<reference key="3">
    <citation type="journal article" date="2002" name="Mol. Microbiol.">
        <title>The ramC gene is required for morphogenesis in Streptomyces coelicolor and expressed in a cell type-specific manner under the direct control of RamR.</title>
        <authorList>
            <person name="O'Connor T.J."/>
            <person name="Kanellis P."/>
            <person name="Nodwell J.R."/>
        </authorList>
    </citation>
    <scope>FUNCTION</scope>
    <scope>DISRUPTION PHENOTYPE</scope>
    <scope>DNA-BINDING</scope>
    <source>
        <strain>ATCC BAA-471 / A3(2) / M145</strain>
    </source>
</reference>
<reference key="4">
    <citation type="journal article" date="2002" name="Mol. Microbiol.">
        <title>A central regulator of morphological differentiation in the multicellular bacterium Streptomyces coelicolor.</title>
        <authorList>
            <person name="Nguyen K.T."/>
            <person name="Willey J.M."/>
            <person name="Nguyen L.D."/>
            <person name="Nguyen L.T."/>
            <person name="Viollier P.H."/>
            <person name="Thompson C.J."/>
        </authorList>
    </citation>
    <scope>FUNCTION</scope>
    <scope>INDUCTION</scope>
    <scope>DISRUPTION PHENOTYPE</scope>
    <scope>MUTAGENESIS OF ASP-56</scope>
    <scope>DNA-BINDING</scope>
    <source>
        <strain>A3(2) / J1501</strain>
    </source>
</reference>
<reference key="5">
    <citation type="journal article" date="2005" name="J. Mol. Biol.">
        <title>Pivotal roles for the receiver domain in the mechanism of action of the response regulator RamR of Streptomyces coelicolor.</title>
        <authorList>
            <person name="O'Connor T.J."/>
            <person name="Nodwell J.R."/>
        </authorList>
    </citation>
    <scope>FUNCTION</scope>
    <scope>SUBUNIT</scope>
    <scope>DOMAIN</scope>
    <scope>MUTAGENESIS OF ASP-12; ASP-56; THR-84; LEU-102 AND LYS-105</scope>
    <scope>DNA-BINDING</scope>
    <source>
        <strain>ATCC BAA-471 / A3(2) / M145</strain>
    </source>
</reference>
<reference key="6">
    <citation type="journal article" date="2006" name="Mol. Microbiol.">
        <title>rag genes: novel components of the RamR regulon that trigger morphological differentiation in Streptomyces coelicolor.</title>
        <authorList>
            <person name="San Paolo S."/>
            <person name="Huang J."/>
            <person name="Cohen S.N."/>
            <person name="Thompson C.J."/>
        </authorList>
    </citation>
    <scope>FUNCTION</scope>
    <scope>REGULON</scope>
    <source>
        <strain>A3(2) / J1501</strain>
    </source>
</reference>
<reference key="7">
    <citation type="journal article" date="2007" name="Mol. Microbiol.">
        <title>SapB and the chaplins: connections between morphogenetic proteins in Streptomyces coelicolor.</title>
        <authorList>
            <person name="Capstick D.S."/>
            <person name="Willey J.M."/>
            <person name="Buttner M.J."/>
            <person name="Elliot M.A."/>
        </authorList>
    </citation>
    <scope>FUNCTION</scope>
    <scope>DISRUPTION PHENOTYPE</scope>
    <source>
        <strain>A3(2) / M600</strain>
    </source>
</reference>
<reference key="8">
    <citation type="journal article" date="2012" name="Mol. Microbiol.">
        <title>Multi-tier regulation of the streptomycete morphogenetic peptide SapB.</title>
        <authorList>
            <person name="Gaskell A.A."/>
            <person name="Giovinazzo J.A."/>
            <person name="Fonte V."/>
            <person name="Willey J.M."/>
        </authorList>
    </citation>
    <scope>INDUCTION</scope>
    <source>
        <strain>A3(2) / M600</strain>
    </source>
</reference>
<proteinExistence type="evidence at protein level"/>
<name>RAMR_STRCO</name>